<name>RBL18_ARATH</name>
<accession>Q8RXQ2</accession>
<accession>O80671</accession>
<keyword id="KW-0472">Membrane</keyword>
<keyword id="KW-1185">Reference proteome</keyword>
<keyword id="KW-0812">Transmembrane</keyword>
<keyword id="KW-1133">Transmembrane helix</keyword>
<reference key="1">
    <citation type="journal article" date="1999" name="Nature">
        <title>Sequence and analysis of chromosome 2 of the plant Arabidopsis thaliana.</title>
        <authorList>
            <person name="Lin X."/>
            <person name="Kaul S."/>
            <person name="Rounsley S.D."/>
            <person name="Shea T.P."/>
            <person name="Benito M.-I."/>
            <person name="Town C.D."/>
            <person name="Fujii C.Y."/>
            <person name="Mason T.M."/>
            <person name="Bowman C.L."/>
            <person name="Barnstead M.E."/>
            <person name="Feldblyum T.V."/>
            <person name="Buell C.R."/>
            <person name="Ketchum K.A."/>
            <person name="Lee J.J."/>
            <person name="Ronning C.M."/>
            <person name="Koo H.L."/>
            <person name="Moffat K.S."/>
            <person name="Cronin L.A."/>
            <person name="Shen M."/>
            <person name="Pai G."/>
            <person name="Van Aken S."/>
            <person name="Umayam L."/>
            <person name="Tallon L.J."/>
            <person name="Gill J.E."/>
            <person name="Adams M.D."/>
            <person name="Carrera A.J."/>
            <person name="Creasy T.H."/>
            <person name="Goodman H.M."/>
            <person name="Somerville C.R."/>
            <person name="Copenhaver G.P."/>
            <person name="Preuss D."/>
            <person name="Nierman W.C."/>
            <person name="White O."/>
            <person name="Eisen J.A."/>
            <person name="Salzberg S.L."/>
            <person name="Fraser C.M."/>
            <person name="Venter J.C."/>
        </authorList>
    </citation>
    <scope>NUCLEOTIDE SEQUENCE [LARGE SCALE GENOMIC DNA]</scope>
    <source>
        <strain>cv. Columbia</strain>
    </source>
</reference>
<reference key="2">
    <citation type="journal article" date="2017" name="Plant J.">
        <title>Araport11: a complete reannotation of the Arabidopsis thaliana reference genome.</title>
        <authorList>
            <person name="Cheng C.Y."/>
            <person name="Krishnakumar V."/>
            <person name="Chan A.P."/>
            <person name="Thibaud-Nissen F."/>
            <person name="Schobel S."/>
            <person name="Town C.D."/>
        </authorList>
    </citation>
    <scope>GENOME REANNOTATION</scope>
    <source>
        <strain>cv. Columbia</strain>
    </source>
</reference>
<reference key="3">
    <citation type="journal article" date="2003" name="Science">
        <title>Empirical analysis of transcriptional activity in the Arabidopsis genome.</title>
        <authorList>
            <person name="Yamada K."/>
            <person name="Lim J."/>
            <person name="Dale J.M."/>
            <person name="Chen H."/>
            <person name="Shinn P."/>
            <person name="Palm C.J."/>
            <person name="Southwick A.M."/>
            <person name="Wu H.C."/>
            <person name="Kim C.J."/>
            <person name="Nguyen M."/>
            <person name="Pham P.K."/>
            <person name="Cheuk R.F."/>
            <person name="Karlin-Newmann G."/>
            <person name="Liu S.X."/>
            <person name="Lam B."/>
            <person name="Sakano H."/>
            <person name="Wu T."/>
            <person name="Yu G."/>
            <person name="Miranda M."/>
            <person name="Quach H.L."/>
            <person name="Tripp M."/>
            <person name="Chang C.H."/>
            <person name="Lee J.M."/>
            <person name="Toriumi M.J."/>
            <person name="Chan M.M."/>
            <person name="Tang C.C."/>
            <person name="Onodera C.S."/>
            <person name="Deng J.M."/>
            <person name="Akiyama K."/>
            <person name="Ansari Y."/>
            <person name="Arakawa T."/>
            <person name="Banh J."/>
            <person name="Banno F."/>
            <person name="Bowser L."/>
            <person name="Brooks S.Y."/>
            <person name="Carninci P."/>
            <person name="Chao Q."/>
            <person name="Choy N."/>
            <person name="Enju A."/>
            <person name="Goldsmith A.D."/>
            <person name="Gurjal M."/>
            <person name="Hansen N.F."/>
            <person name="Hayashizaki Y."/>
            <person name="Johnson-Hopson C."/>
            <person name="Hsuan V.W."/>
            <person name="Iida K."/>
            <person name="Karnes M."/>
            <person name="Khan S."/>
            <person name="Koesema E."/>
            <person name="Ishida J."/>
            <person name="Jiang P.X."/>
            <person name="Jones T."/>
            <person name="Kawai J."/>
            <person name="Kamiya A."/>
            <person name="Meyers C."/>
            <person name="Nakajima M."/>
            <person name="Narusaka M."/>
            <person name="Seki M."/>
            <person name="Sakurai T."/>
            <person name="Satou M."/>
            <person name="Tamse R."/>
            <person name="Vaysberg M."/>
            <person name="Wallender E.K."/>
            <person name="Wong C."/>
            <person name="Yamamura Y."/>
            <person name="Yuan S."/>
            <person name="Shinozaki K."/>
            <person name="Davis R.W."/>
            <person name="Theologis A."/>
            <person name="Ecker J.R."/>
        </authorList>
    </citation>
    <scope>NUCLEOTIDE SEQUENCE [LARGE SCALE MRNA]</scope>
    <source>
        <strain>cv. Columbia</strain>
    </source>
</reference>
<reference key="4">
    <citation type="journal article" date="2006" name="BMC Genomics">
        <title>Cross genome comparisons of serine proteases in Arabidopsis and rice.</title>
        <authorList>
            <person name="Tripathi L.P."/>
            <person name="Sowdhamini R."/>
        </authorList>
    </citation>
    <scope>GENE FAMILY</scope>
    <scope>NOMENCLATURE</scope>
</reference>
<reference key="5">
    <citation type="journal article" date="2007" name="Genome Res.">
        <title>Functional and evolutionary implications of enhanced genomic analysis of rhomboid intramembrane proteases.</title>
        <authorList>
            <person name="Lemberg M.K."/>
            <person name="Freeman M."/>
        </authorList>
    </citation>
    <scope>GENE FAMILY</scope>
</reference>
<evidence type="ECO:0000255" key="1"/>
<evidence type="ECO:0000255" key="2">
    <source>
        <dbReference type="PROSITE-ProRule" id="PRU00212"/>
    </source>
</evidence>
<evidence type="ECO:0000303" key="3">
    <source>
    </source>
</evidence>
<evidence type="ECO:0000303" key="4">
    <source>
    </source>
</evidence>
<evidence type="ECO:0000305" key="5"/>
<evidence type="ECO:0000312" key="6">
    <source>
        <dbReference type="Araport" id="AT2G41160"/>
    </source>
</evidence>
<evidence type="ECO:0000312" key="7">
    <source>
        <dbReference type="EMBL" id="AAD11996.1"/>
    </source>
</evidence>
<evidence type="ECO:0000312" key="8">
    <source>
        <dbReference type="EMBL" id="AAL86004.1"/>
    </source>
</evidence>
<gene>
    <name evidence="3" type="primary">RBL18</name>
    <name evidence="6" type="ordered locus">At2g41160</name>
    <name evidence="7" type="ORF">T3K9.7</name>
</gene>
<proteinExistence type="evidence at transcript level"/>
<dbReference type="EMBL" id="AC004261">
    <property type="protein sequence ID" value="AAD11996.1"/>
    <property type="status" value="ALT_SEQ"/>
    <property type="molecule type" value="Genomic_DNA"/>
</dbReference>
<dbReference type="EMBL" id="CP002685">
    <property type="protein sequence ID" value="AEC09939.1"/>
    <property type="molecule type" value="Genomic_DNA"/>
</dbReference>
<dbReference type="EMBL" id="AY080734">
    <property type="protein sequence ID" value="AAL86004.1"/>
    <property type="molecule type" value="mRNA"/>
</dbReference>
<dbReference type="EMBL" id="AY133793">
    <property type="protein sequence ID" value="AAM91727.1"/>
    <property type="molecule type" value="mRNA"/>
</dbReference>
<dbReference type="PIR" id="T02103">
    <property type="entry name" value="T02103"/>
</dbReference>
<dbReference type="RefSeq" id="NP_850346.1">
    <property type="nucleotide sequence ID" value="NM_180015.4"/>
</dbReference>
<dbReference type="SMR" id="Q8RXQ2"/>
<dbReference type="FunCoup" id="Q8RXQ2">
    <property type="interactions" value="3185"/>
</dbReference>
<dbReference type="STRING" id="3702.Q8RXQ2"/>
<dbReference type="iPTMnet" id="Q8RXQ2"/>
<dbReference type="PaxDb" id="3702-AT2G41160.1"/>
<dbReference type="ProteomicsDB" id="225911"/>
<dbReference type="EnsemblPlants" id="AT2G41160.1">
    <property type="protein sequence ID" value="AT2G41160.1"/>
    <property type="gene ID" value="AT2G41160"/>
</dbReference>
<dbReference type="GeneID" id="818715"/>
<dbReference type="Gramene" id="AT2G41160.1">
    <property type="protein sequence ID" value="AT2G41160.1"/>
    <property type="gene ID" value="AT2G41160"/>
</dbReference>
<dbReference type="KEGG" id="ath:AT2G41160"/>
<dbReference type="Araport" id="AT2G41160"/>
<dbReference type="TAIR" id="AT2G41160">
    <property type="gene designation" value="UBAC2B"/>
</dbReference>
<dbReference type="eggNOG" id="KOG4463">
    <property type="taxonomic scope" value="Eukaryota"/>
</dbReference>
<dbReference type="HOGENOM" id="CLU_057710_1_0_1"/>
<dbReference type="InParanoid" id="Q8RXQ2"/>
<dbReference type="OMA" id="RYRQFWR"/>
<dbReference type="PhylomeDB" id="Q8RXQ2"/>
<dbReference type="PRO" id="PR:Q8RXQ2"/>
<dbReference type="Proteomes" id="UP000006548">
    <property type="component" value="Chromosome 2"/>
</dbReference>
<dbReference type="ExpressionAtlas" id="Q8RXQ2">
    <property type="expression patterns" value="baseline and differential"/>
</dbReference>
<dbReference type="GO" id="GO:0005776">
    <property type="term" value="C:autophagosome"/>
    <property type="evidence" value="ECO:0000314"/>
    <property type="project" value="TAIR"/>
</dbReference>
<dbReference type="GO" id="GO:0005783">
    <property type="term" value="C:endoplasmic reticulum"/>
    <property type="evidence" value="ECO:0000314"/>
    <property type="project" value="TAIR"/>
</dbReference>
<dbReference type="GO" id="GO:0016020">
    <property type="term" value="C:membrane"/>
    <property type="evidence" value="ECO:0007669"/>
    <property type="project" value="UniProtKB-SubCell"/>
</dbReference>
<dbReference type="GO" id="GO:0061908">
    <property type="term" value="C:phagophore"/>
    <property type="evidence" value="ECO:0000314"/>
    <property type="project" value="TAIR"/>
</dbReference>
<dbReference type="GO" id="GO:0004252">
    <property type="term" value="F:serine-type endopeptidase activity"/>
    <property type="evidence" value="ECO:0007669"/>
    <property type="project" value="InterPro"/>
</dbReference>
<dbReference type="GO" id="GO:0010286">
    <property type="term" value="P:heat acclimation"/>
    <property type="evidence" value="ECO:0000316"/>
    <property type="project" value="TAIR"/>
</dbReference>
<dbReference type="FunFam" id="1.10.8.10:FF:000074">
    <property type="entry name" value="Ubiquitin-associated domain-containing protein 2"/>
    <property type="match status" value="1"/>
</dbReference>
<dbReference type="Gene3D" id="1.10.8.10">
    <property type="entry name" value="DNA helicase RuvA subunit, C-terminal domain"/>
    <property type="match status" value="1"/>
</dbReference>
<dbReference type="Gene3D" id="1.20.1540.10">
    <property type="entry name" value="Rhomboid-like"/>
    <property type="match status" value="1"/>
</dbReference>
<dbReference type="InterPro" id="IPR022764">
    <property type="entry name" value="Peptidase_S54_rhomboid_dom"/>
</dbReference>
<dbReference type="InterPro" id="IPR035952">
    <property type="entry name" value="Rhomboid-like_sf"/>
</dbReference>
<dbReference type="InterPro" id="IPR015940">
    <property type="entry name" value="UBA"/>
</dbReference>
<dbReference type="InterPro" id="IPR009060">
    <property type="entry name" value="UBA-like_sf"/>
</dbReference>
<dbReference type="PANTHER" id="PTHR43066">
    <property type="entry name" value="RHOMBOID-RELATED PROTEIN"/>
    <property type="match status" value="1"/>
</dbReference>
<dbReference type="PANTHER" id="PTHR43066:SF21">
    <property type="entry name" value="UBIQUITIN-ASSOCIATED DOMAIN-CONTAINING PROTEIN 2"/>
    <property type="match status" value="1"/>
</dbReference>
<dbReference type="Pfam" id="PF01694">
    <property type="entry name" value="Rhomboid"/>
    <property type="match status" value="1"/>
</dbReference>
<dbReference type="Pfam" id="PF00627">
    <property type="entry name" value="UBA"/>
    <property type="match status" value="1"/>
</dbReference>
<dbReference type="SMART" id="SM00165">
    <property type="entry name" value="UBA"/>
    <property type="match status" value="1"/>
</dbReference>
<dbReference type="SUPFAM" id="SSF144091">
    <property type="entry name" value="Rhomboid-like"/>
    <property type="match status" value="1"/>
</dbReference>
<dbReference type="SUPFAM" id="SSF46934">
    <property type="entry name" value="UBA-like"/>
    <property type="match status" value="1"/>
</dbReference>
<dbReference type="PROSITE" id="PS50030">
    <property type="entry name" value="UBA"/>
    <property type="match status" value="1"/>
</dbReference>
<comment type="function">
    <text evidence="3">Probable rhomboid-type serine protease that catalyzes intramembrane proteolysis.</text>
</comment>
<comment type="subcellular location">
    <subcellularLocation>
        <location evidence="1">Membrane</location>
        <topology evidence="1">Multi-pass membrane protein</topology>
    </subcellularLocation>
</comment>
<comment type="similarity">
    <text evidence="5">Belongs to the peptidase S54 family.</text>
</comment>
<comment type="caution">
    <text evidence="4">Might be an inactive rhomboid-type serine protease due to mismatches with the consensus active sites.</text>
</comment>
<comment type="sequence caution" evidence="5">
    <conflict type="erroneous gene model prediction">
        <sequence resource="EMBL-CDS" id="AAD11996"/>
    </conflict>
</comment>
<organism evidence="8">
    <name type="scientific">Arabidopsis thaliana</name>
    <name type="common">Mouse-ear cress</name>
    <dbReference type="NCBI Taxonomy" id="3702"/>
    <lineage>
        <taxon>Eukaryota</taxon>
        <taxon>Viridiplantae</taxon>
        <taxon>Streptophyta</taxon>
        <taxon>Embryophyta</taxon>
        <taxon>Tracheophyta</taxon>
        <taxon>Spermatophyta</taxon>
        <taxon>Magnoliopsida</taxon>
        <taxon>eudicotyledons</taxon>
        <taxon>Gunneridae</taxon>
        <taxon>Pentapetalae</taxon>
        <taxon>rosids</taxon>
        <taxon>malvids</taxon>
        <taxon>Brassicales</taxon>
        <taxon>Brassicaceae</taxon>
        <taxon>Camelineae</taxon>
        <taxon>Arabidopsis</taxon>
    </lineage>
</organism>
<sequence length="287" mass="31690">MNGGPSGFNNAPVTKAFVIATALFTVFFGIRGGSSKLGLSYQDIFEKFRIWKLIISAFAFSSTTQLLSGLYLLYFFRVFERQIGSNKYSVFIFFSGFVSLILETILLSLTKDPTANLLTSGPYALVFASFVPFFLDIPVTKRFGVLGVHFSDKSFIYLAGVQLLLSSWKRSIFTGICGIIAGSLYRLNIFGIRKAKFPEFMASLFSRFSLPSLSSHSQPPRRTSPNLGRQAVRAYRAPMPSTTEPSEEAIATLVSMGFDQNAARQALVHARNDVNAATNILLEAHSH</sequence>
<protein>
    <recommendedName>
        <fullName evidence="3">Rhomboid-like protein 18</fullName>
        <shortName evidence="3">AtRBL18</shortName>
    </recommendedName>
</protein>
<feature type="chain" id="PRO_0000433337" description="Rhomboid-like protein 18">
    <location>
        <begin position="1"/>
        <end position="287"/>
    </location>
</feature>
<feature type="transmembrane region" description="Helical" evidence="1">
    <location>
        <begin position="10"/>
        <end position="30"/>
    </location>
</feature>
<feature type="transmembrane region" description="Helical" evidence="1">
    <location>
        <begin position="53"/>
        <end position="73"/>
    </location>
</feature>
<feature type="transmembrane region" description="Helical" evidence="1">
    <location>
        <begin position="90"/>
        <end position="110"/>
    </location>
</feature>
<feature type="transmembrane region" description="Helical" evidence="1">
    <location>
        <begin position="117"/>
        <end position="137"/>
    </location>
</feature>
<feature type="transmembrane region" description="Helical" evidence="1">
    <location>
        <begin position="145"/>
        <end position="165"/>
    </location>
</feature>
<feature type="transmembrane region" description="Helical" evidence="1">
    <location>
        <begin position="172"/>
        <end position="192"/>
    </location>
</feature>
<feature type="domain" description="UBA" evidence="2">
    <location>
        <begin position="244"/>
        <end position="284"/>
    </location>
</feature>